<proteinExistence type="inferred from homology"/>
<feature type="chain" id="PRO_1000020602" description="tRNA dimethylallyltransferase">
    <location>
        <begin position="1"/>
        <end position="308"/>
    </location>
</feature>
<feature type="region of interest" description="Interaction with substrate tRNA" evidence="1">
    <location>
        <begin position="35"/>
        <end position="38"/>
    </location>
</feature>
<feature type="region of interest" description="Interaction with substrate tRNA" evidence="1">
    <location>
        <begin position="159"/>
        <end position="163"/>
    </location>
</feature>
<feature type="binding site" evidence="1">
    <location>
        <begin position="10"/>
        <end position="17"/>
    </location>
    <ligand>
        <name>ATP</name>
        <dbReference type="ChEBI" id="CHEBI:30616"/>
    </ligand>
</feature>
<feature type="binding site" evidence="1">
    <location>
        <begin position="12"/>
        <end position="17"/>
    </location>
    <ligand>
        <name>substrate</name>
    </ligand>
</feature>
<feature type="site" description="Interaction with substrate tRNA" evidence="1">
    <location>
        <position position="101"/>
    </location>
</feature>
<feature type="site" description="Interaction with substrate tRNA" evidence="1">
    <location>
        <position position="123"/>
    </location>
</feature>
<accession>Q0BM87</accession>
<protein>
    <recommendedName>
        <fullName evidence="1">tRNA dimethylallyltransferase</fullName>
        <ecNumber evidence="1">2.5.1.75</ecNumber>
    </recommendedName>
    <alternativeName>
        <fullName evidence="1">Dimethylallyl diphosphate:tRNA dimethylallyltransferase</fullName>
        <shortName evidence="1">DMAPP:tRNA dimethylallyltransferase</shortName>
        <shortName evidence="1">DMATase</shortName>
    </alternativeName>
    <alternativeName>
        <fullName evidence="1">Isopentenyl-diphosphate:tRNA isopentenyltransferase</fullName>
        <shortName evidence="1">IPP transferase</shortName>
        <shortName evidence="1">IPPT</shortName>
        <shortName evidence="1">IPTase</shortName>
    </alternativeName>
</protein>
<evidence type="ECO:0000255" key="1">
    <source>
        <dbReference type="HAMAP-Rule" id="MF_00185"/>
    </source>
</evidence>
<keyword id="KW-0067">ATP-binding</keyword>
<keyword id="KW-0460">Magnesium</keyword>
<keyword id="KW-0547">Nucleotide-binding</keyword>
<keyword id="KW-0808">Transferase</keyword>
<keyword id="KW-0819">tRNA processing</keyword>
<reference key="1">
    <citation type="journal article" date="2006" name="J. Bacteriol.">
        <title>Chromosome rearrangement and diversification of Francisella tularensis revealed by the type B (OSU18) genome sequence.</title>
        <authorList>
            <person name="Petrosino J.F."/>
            <person name="Xiang Q."/>
            <person name="Karpathy S.E."/>
            <person name="Jiang H."/>
            <person name="Yerrapragada S."/>
            <person name="Liu Y."/>
            <person name="Gioia J."/>
            <person name="Hemphill L."/>
            <person name="Gonzalez A."/>
            <person name="Raghavan T.M."/>
            <person name="Uzman A."/>
            <person name="Fox G.E."/>
            <person name="Highlander S."/>
            <person name="Reichard M."/>
            <person name="Morton R.J."/>
            <person name="Clinkenbeard K.D."/>
            <person name="Weinstock G.M."/>
        </authorList>
    </citation>
    <scope>NUCLEOTIDE SEQUENCE [LARGE SCALE GENOMIC DNA]</scope>
    <source>
        <strain>OSU18</strain>
    </source>
</reference>
<gene>
    <name evidence="1" type="primary">miaA</name>
    <name type="ordered locus">FTH_0882</name>
</gene>
<sequence length="308" mass="34833">MSKLIYGLAGPTASGKTSLSILLAKKINAEIISVDSSLVYKGMDIGTAKPTLQEQDGIKHHLIDIIEPTGNFSVADFISSVNKLKKEIWARGREVLLVGGTMLYFKGLIEGLSALPESQAEIREALEYQKKAKGLQYLHQQLNEIDPQSAQKINPNDQQRIFRALEVIMISGKKYSELVKTSKVGGLDEDLKLCALVPNDRSILHKNIESRFRQMLDQGFLDEVQNLHKNPMLTKETTAIRSVGYRQAWEYLDGDISYDEFVKKGIVATRQLAKRQLTWIRNWQSSINIVAMENETKELDILKYFGYK</sequence>
<dbReference type="EC" id="2.5.1.75" evidence="1"/>
<dbReference type="EMBL" id="CP000437">
    <property type="protein sequence ID" value="ABI82797.1"/>
    <property type="molecule type" value="Genomic_DNA"/>
</dbReference>
<dbReference type="RefSeq" id="WP_003015652.1">
    <property type="nucleotide sequence ID" value="NC_017463.1"/>
</dbReference>
<dbReference type="SMR" id="Q0BM87"/>
<dbReference type="KEGG" id="fth:FTH_0882"/>
<dbReference type="GO" id="GO:0005524">
    <property type="term" value="F:ATP binding"/>
    <property type="evidence" value="ECO:0007669"/>
    <property type="project" value="UniProtKB-UniRule"/>
</dbReference>
<dbReference type="GO" id="GO:0052381">
    <property type="term" value="F:tRNA dimethylallyltransferase activity"/>
    <property type="evidence" value="ECO:0007669"/>
    <property type="project" value="UniProtKB-UniRule"/>
</dbReference>
<dbReference type="GO" id="GO:0006400">
    <property type="term" value="P:tRNA modification"/>
    <property type="evidence" value="ECO:0007669"/>
    <property type="project" value="TreeGrafter"/>
</dbReference>
<dbReference type="FunFam" id="1.10.20.140:FF:000001">
    <property type="entry name" value="tRNA dimethylallyltransferase"/>
    <property type="match status" value="1"/>
</dbReference>
<dbReference type="Gene3D" id="1.10.20.140">
    <property type="match status" value="1"/>
</dbReference>
<dbReference type="Gene3D" id="3.40.50.300">
    <property type="entry name" value="P-loop containing nucleotide triphosphate hydrolases"/>
    <property type="match status" value="1"/>
</dbReference>
<dbReference type="HAMAP" id="MF_00185">
    <property type="entry name" value="IPP_trans"/>
    <property type="match status" value="1"/>
</dbReference>
<dbReference type="InterPro" id="IPR039657">
    <property type="entry name" value="Dimethylallyltransferase"/>
</dbReference>
<dbReference type="InterPro" id="IPR018022">
    <property type="entry name" value="IPT"/>
</dbReference>
<dbReference type="InterPro" id="IPR027417">
    <property type="entry name" value="P-loop_NTPase"/>
</dbReference>
<dbReference type="NCBIfam" id="TIGR00174">
    <property type="entry name" value="miaA"/>
    <property type="match status" value="1"/>
</dbReference>
<dbReference type="PANTHER" id="PTHR11088">
    <property type="entry name" value="TRNA DIMETHYLALLYLTRANSFERASE"/>
    <property type="match status" value="1"/>
</dbReference>
<dbReference type="PANTHER" id="PTHR11088:SF60">
    <property type="entry name" value="TRNA DIMETHYLALLYLTRANSFERASE"/>
    <property type="match status" value="1"/>
</dbReference>
<dbReference type="Pfam" id="PF01715">
    <property type="entry name" value="IPPT"/>
    <property type="match status" value="1"/>
</dbReference>
<dbReference type="SUPFAM" id="SSF52540">
    <property type="entry name" value="P-loop containing nucleoside triphosphate hydrolases"/>
    <property type="match status" value="1"/>
</dbReference>
<name>MIAA_FRATO</name>
<organism>
    <name type="scientific">Francisella tularensis subsp. holarctica (strain OSU18)</name>
    <dbReference type="NCBI Taxonomy" id="393011"/>
    <lineage>
        <taxon>Bacteria</taxon>
        <taxon>Pseudomonadati</taxon>
        <taxon>Pseudomonadota</taxon>
        <taxon>Gammaproteobacteria</taxon>
        <taxon>Thiotrichales</taxon>
        <taxon>Francisellaceae</taxon>
        <taxon>Francisella</taxon>
    </lineage>
</organism>
<comment type="function">
    <text evidence="1">Catalyzes the transfer of a dimethylallyl group onto the adenine at position 37 in tRNAs that read codons beginning with uridine, leading to the formation of N6-(dimethylallyl)adenosine (i(6)A).</text>
</comment>
<comment type="catalytic activity">
    <reaction evidence="1">
        <text>adenosine(37) in tRNA + dimethylallyl diphosphate = N(6)-dimethylallyladenosine(37) in tRNA + diphosphate</text>
        <dbReference type="Rhea" id="RHEA:26482"/>
        <dbReference type="Rhea" id="RHEA-COMP:10162"/>
        <dbReference type="Rhea" id="RHEA-COMP:10375"/>
        <dbReference type="ChEBI" id="CHEBI:33019"/>
        <dbReference type="ChEBI" id="CHEBI:57623"/>
        <dbReference type="ChEBI" id="CHEBI:74411"/>
        <dbReference type="ChEBI" id="CHEBI:74415"/>
        <dbReference type="EC" id="2.5.1.75"/>
    </reaction>
</comment>
<comment type="cofactor">
    <cofactor evidence="1">
        <name>Mg(2+)</name>
        <dbReference type="ChEBI" id="CHEBI:18420"/>
    </cofactor>
</comment>
<comment type="subunit">
    <text evidence="1">Monomer.</text>
</comment>
<comment type="similarity">
    <text evidence="1">Belongs to the IPP transferase family.</text>
</comment>